<name>OBG_BURM9</name>
<organism>
    <name type="scientific">Burkholderia mallei (strain NCTC 10229)</name>
    <dbReference type="NCBI Taxonomy" id="412022"/>
    <lineage>
        <taxon>Bacteria</taxon>
        <taxon>Pseudomonadati</taxon>
        <taxon>Pseudomonadota</taxon>
        <taxon>Betaproteobacteria</taxon>
        <taxon>Burkholderiales</taxon>
        <taxon>Burkholderiaceae</taxon>
        <taxon>Burkholderia</taxon>
        <taxon>pseudomallei group</taxon>
    </lineage>
</organism>
<accession>A2S5R8</accession>
<evidence type="ECO:0000255" key="1">
    <source>
        <dbReference type="HAMAP-Rule" id="MF_01454"/>
    </source>
</evidence>
<evidence type="ECO:0000255" key="2">
    <source>
        <dbReference type="PROSITE-ProRule" id="PRU01231"/>
    </source>
</evidence>
<evidence type="ECO:0000256" key="3">
    <source>
        <dbReference type="SAM" id="MobiDB-lite"/>
    </source>
</evidence>
<proteinExistence type="inferred from homology"/>
<gene>
    <name evidence="1" type="primary">obg</name>
    <name type="ordered locus">BMA10229_A1303</name>
</gene>
<dbReference type="EC" id="3.6.5.-" evidence="1"/>
<dbReference type="EMBL" id="CP000546">
    <property type="protein sequence ID" value="ABN01395.1"/>
    <property type="molecule type" value="Genomic_DNA"/>
</dbReference>
<dbReference type="SMR" id="A2S5R8"/>
<dbReference type="KEGG" id="bml:BMA10229_A1303"/>
<dbReference type="HOGENOM" id="CLU_011747_2_0_4"/>
<dbReference type="Proteomes" id="UP000002283">
    <property type="component" value="Chromosome I"/>
</dbReference>
<dbReference type="GO" id="GO:0005737">
    <property type="term" value="C:cytoplasm"/>
    <property type="evidence" value="ECO:0007669"/>
    <property type="project" value="UniProtKB-SubCell"/>
</dbReference>
<dbReference type="GO" id="GO:0005525">
    <property type="term" value="F:GTP binding"/>
    <property type="evidence" value="ECO:0007669"/>
    <property type="project" value="UniProtKB-UniRule"/>
</dbReference>
<dbReference type="GO" id="GO:0003924">
    <property type="term" value="F:GTPase activity"/>
    <property type="evidence" value="ECO:0007669"/>
    <property type="project" value="UniProtKB-UniRule"/>
</dbReference>
<dbReference type="GO" id="GO:0000287">
    <property type="term" value="F:magnesium ion binding"/>
    <property type="evidence" value="ECO:0007669"/>
    <property type="project" value="InterPro"/>
</dbReference>
<dbReference type="GO" id="GO:0042254">
    <property type="term" value="P:ribosome biogenesis"/>
    <property type="evidence" value="ECO:0007669"/>
    <property type="project" value="UniProtKB-UniRule"/>
</dbReference>
<dbReference type="CDD" id="cd01898">
    <property type="entry name" value="Obg"/>
    <property type="match status" value="1"/>
</dbReference>
<dbReference type="FunFam" id="2.70.210.12:FF:000001">
    <property type="entry name" value="GTPase Obg"/>
    <property type="match status" value="1"/>
</dbReference>
<dbReference type="Gene3D" id="2.70.210.12">
    <property type="entry name" value="GTP1/OBG domain"/>
    <property type="match status" value="1"/>
</dbReference>
<dbReference type="Gene3D" id="3.40.50.300">
    <property type="entry name" value="P-loop containing nucleotide triphosphate hydrolases"/>
    <property type="match status" value="1"/>
</dbReference>
<dbReference type="HAMAP" id="MF_01454">
    <property type="entry name" value="GTPase_Obg"/>
    <property type="match status" value="1"/>
</dbReference>
<dbReference type="InterPro" id="IPR031167">
    <property type="entry name" value="G_OBG"/>
</dbReference>
<dbReference type="InterPro" id="IPR006073">
    <property type="entry name" value="GTP-bd"/>
</dbReference>
<dbReference type="InterPro" id="IPR014100">
    <property type="entry name" value="GTP-bd_Obg/CgtA"/>
</dbReference>
<dbReference type="InterPro" id="IPR006074">
    <property type="entry name" value="GTP1-OBG_CS"/>
</dbReference>
<dbReference type="InterPro" id="IPR006169">
    <property type="entry name" value="GTP1_OBG_dom"/>
</dbReference>
<dbReference type="InterPro" id="IPR036726">
    <property type="entry name" value="GTP1_OBG_dom_sf"/>
</dbReference>
<dbReference type="InterPro" id="IPR045086">
    <property type="entry name" value="OBG_GTPase"/>
</dbReference>
<dbReference type="InterPro" id="IPR027417">
    <property type="entry name" value="P-loop_NTPase"/>
</dbReference>
<dbReference type="NCBIfam" id="TIGR02729">
    <property type="entry name" value="Obg_CgtA"/>
    <property type="match status" value="1"/>
</dbReference>
<dbReference type="NCBIfam" id="NF008954">
    <property type="entry name" value="PRK12296.1"/>
    <property type="match status" value="1"/>
</dbReference>
<dbReference type="NCBIfam" id="NF008955">
    <property type="entry name" value="PRK12297.1"/>
    <property type="match status" value="1"/>
</dbReference>
<dbReference type="NCBIfam" id="NF008956">
    <property type="entry name" value="PRK12299.1"/>
    <property type="match status" value="1"/>
</dbReference>
<dbReference type="PANTHER" id="PTHR11702">
    <property type="entry name" value="DEVELOPMENTALLY REGULATED GTP-BINDING PROTEIN-RELATED"/>
    <property type="match status" value="1"/>
</dbReference>
<dbReference type="PANTHER" id="PTHR11702:SF31">
    <property type="entry name" value="MITOCHONDRIAL RIBOSOME-ASSOCIATED GTPASE 2"/>
    <property type="match status" value="1"/>
</dbReference>
<dbReference type="Pfam" id="PF01018">
    <property type="entry name" value="GTP1_OBG"/>
    <property type="match status" value="1"/>
</dbReference>
<dbReference type="Pfam" id="PF01926">
    <property type="entry name" value="MMR_HSR1"/>
    <property type="match status" value="1"/>
</dbReference>
<dbReference type="PIRSF" id="PIRSF002401">
    <property type="entry name" value="GTP_bd_Obg/CgtA"/>
    <property type="match status" value="1"/>
</dbReference>
<dbReference type="PRINTS" id="PR00326">
    <property type="entry name" value="GTP1OBG"/>
</dbReference>
<dbReference type="SUPFAM" id="SSF82051">
    <property type="entry name" value="Obg GTP-binding protein N-terminal domain"/>
    <property type="match status" value="1"/>
</dbReference>
<dbReference type="SUPFAM" id="SSF52540">
    <property type="entry name" value="P-loop containing nucleoside triphosphate hydrolases"/>
    <property type="match status" value="1"/>
</dbReference>
<dbReference type="PROSITE" id="PS51710">
    <property type="entry name" value="G_OBG"/>
    <property type="match status" value="1"/>
</dbReference>
<dbReference type="PROSITE" id="PS00905">
    <property type="entry name" value="GTP1_OBG"/>
    <property type="match status" value="1"/>
</dbReference>
<dbReference type="PROSITE" id="PS51883">
    <property type="entry name" value="OBG"/>
    <property type="match status" value="1"/>
</dbReference>
<comment type="function">
    <text evidence="1">An essential GTPase which binds GTP, GDP and possibly (p)ppGpp with moderate affinity, with high nucleotide exchange rates and a fairly low GTP hydrolysis rate. Plays a role in control of the cell cycle, stress response, ribosome biogenesis and in those bacteria that undergo differentiation, in morphogenesis control.</text>
</comment>
<comment type="cofactor">
    <cofactor evidence="1">
        <name>Mg(2+)</name>
        <dbReference type="ChEBI" id="CHEBI:18420"/>
    </cofactor>
</comment>
<comment type="subunit">
    <text evidence="1">Monomer.</text>
</comment>
<comment type="subcellular location">
    <subcellularLocation>
        <location evidence="1">Cytoplasm</location>
    </subcellularLocation>
</comment>
<comment type="similarity">
    <text evidence="1">Belongs to the TRAFAC class OBG-HflX-like GTPase superfamily. OBG GTPase family.</text>
</comment>
<reference key="1">
    <citation type="journal article" date="2010" name="Genome Biol. Evol.">
        <title>Continuing evolution of Burkholderia mallei through genome reduction and large-scale rearrangements.</title>
        <authorList>
            <person name="Losada L."/>
            <person name="Ronning C.M."/>
            <person name="DeShazer D."/>
            <person name="Woods D."/>
            <person name="Fedorova N."/>
            <person name="Kim H.S."/>
            <person name="Shabalina S.A."/>
            <person name="Pearson T.R."/>
            <person name="Brinkac L."/>
            <person name="Tan P."/>
            <person name="Nandi T."/>
            <person name="Crabtree J."/>
            <person name="Badger J."/>
            <person name="Beckstrom-Sternberg S."/>
            <person name="Saqib M."/>
            <person name="Schutzer S.E."/>
            <person name="Keim P."/>
            <person name="Nierman W.C."/>
        </authorList>
    </citation>
    <scope>NUCLEOTIDE SEQUENCE [LARGE SCALE GENOMIC DNA]</scope>
    <source>
        <strain>NCTC 10229</strain>
    </source>
</reference>
<sequence length="372" mass="40150">MKFIDEARIEVIAGDGGDGSASMRREKFVPFGGPDGGDGGRGGSVYVIADRNINTLIDYRYAKKHMARNGENGRGSDCYGKGGDDITLRMPVGTVINDMDTGELIADLTEHDQKVLVAKGGAGGLGNLHFKSSTNRAPRQKTDGKPGERRMLKLELKVLADVGLLGMPNAGKSTFISSVSNAKPKIADYPFTTLAPNLGVVRVGPGKSFVIADIPGLIEGAAEGAGLGHQFLRHLQRTGLLLHLVDLAPFDERVDPVAEARAIVGELRKYDESLYEKPRWLVLNKLDMVPEDERRARVADFIERFGWTGPVFEISALTGQGCEGLVYAIHDYLVEHSDAHRAELAEDLASDVRFRDAPGAGGEPHERDAGAH</sequence>
<feature type="chain" id="PRO_0000385783" description="GTPase Obg">
    <location>
        <begin position="1"/>
        <end position="372"/>
    </location>
</feature>
<feature type="domain" description="Obg" evidence="2">
    <location>
        <begin position="1"/>
        <end position="159"/>
    </location>
</feature>
<feature type="domain" description="OBG-type G" evidence="1">
    <location>
        <begin position="160"/>
        <end position="334"/>
    </location>
</feature>
<feature type="region of interest" description="Disordered" evidence="3">
    <location>
        <begin position="128"/>
        <end position="147"/>
    </location>
</feature>
<feature type="binding site" evidence="1">
    <location>
        <begin position="166"/>
        <end position="173"/>
    </location>
    <ligand>
        <name>GTP</name>
        <dbReference type="ChEBI" id="CHEBI:37565"/>
    </ligand>
</feature>
<feature type="binding site" evidence="1">
    <location>
        <position position="173"/>
    </location>
    <ligand>
        <name>Mg(2+)</name>
        <dbReference type="ChEBI" id="CHEBI:18420"/>
    </ligand>
</feature>
<feature type="binding site" evidence="1">
    <location>
        <begin position="191"/>
        <end position="195"/>
    </location>
    <ligand>
        <name>GTP</name>
        <dbReference type="ChEBI" id="CHEBI:37565"/>
    </ligand>
</feature>
<feature type="binding site" evidence="1">
    <location>
        <position position="193"/>
    </location>
    <ligand>
        <name>Mg(2+)</name>
        <dbReference type="ChEBI" id="CHEBI:18420"/>
    </ligand>
</feature>
<feature type="binding site" evidence="1">
    <location>
        <begin position="213"/>
        <end position="216"/>
    </location>
    <ligand>
        <name>GTP</name>
        <dbReference type="ChEBI" id="CHEBI:37565"/>
    </ligand>
</feature>
<feature type="binding site" evidence="1">
    <location>
        <begin position="284"/>
        <end position="287"/>
    </location>
    <ligand>
        <name>GTP</name>
        <dbReference type="ChEBI" id="CHEBI:37565"/>
    </ligand>
</feature>
<feature type="binding site" evidence="1">
    <location>
        <begin position="315"/>
        <end position="317"/>
    </location>
    <ligand>
        <name>GTP</name>
        <dbReference type="ChEBI" id="CHEBI:37565"/>
    </ligand>
</feature>
<protein>
    <recommendedName>
        <fullName evidence="1">GTPase Obg</fullName>
        <ecNumber evidence="1">3.6.5.-</ecNumber>
    </recommendedName>
    <alternativeName>
        <fullName evidence="1">GTP-binding protein Obg</fullName>
    </alternativeName>
</protein>
<keyword id="KW-0963">Cytoplasm</keyword>
<keyword id="KW-0342">GTP-binding</keyword>
<keyword id="KW-0378">Hydrolase</keyword>
<keyword id="KW-0460">Magnesium</keyword>
<keyword id="KW-0479">Metal-binding</keyword>
<keyword id="KW-0547">Nucleotide-binding</keyword>